<sequence length="467" mass="52626">MSKFPTVSEILSGKIVVGEKVTVRGWVRTRRDSKAGLSFLTVYDGSCFEPIQVIINNDLANYQTEILRLTAGCSVIVTGNIVESPASGQAVELQALEVEVVGWVDDPDTYPMAAKRHSIEYLREVAHLRPRTNLIGAVARVRHCLAQAIHRFFNGQGFYWVATPLITASDTEGAGEMFRVSTLDLENLPRTEHGKIDYSQDFFGKEAFLTVSGQLNGESYACALSKVYTFGPTFRAENSNTTRHLAEFWMVEPEFAFATLADNAKLAEDMLKYVFKAVLEERKDDMQFFAKHIDKEVITRLENFIAAPFAQVDYSDAIEILLKSGKKFEFPVAWGVDLSSEHERFLAEEHFKSPVVVKNYPKDIKAFYMRLNDDGKTVAAMDVLAPGIGEIIGGSQREERLAVLDSRMIEMGLNPEDYWWYRDLRKYGTVPHAGFGLGFERLIVYVTGLQNIREVIPFPRAPRNANF</sequence>
<reference key="1">
    <citation type="submission" date="2003-06" db="EMBL/GenBank/DDBJ databases">
        <title>The complete genome sequence of Haemophilus ducreyi.</title>
        <authorList>
            <person name="Munson R.S. Jr."/>
            <person name="Ray W.C."/>
            <person name="Mahairas G."/>
            <person name="Sabo P."/>
            <person name="Mungur R."/>
            <person name="Johnson L."/>
            <person name="Nguyen D."/>
            <person name="Wang J."/>
            <person name="Forst C."/>
            <person name="Hood L."/>
        </authorList>
    </citation>
    <scope>NUCLEOTIDE SEQUENCE [LARGE SCALE GENOMIC DNA]</scope>
    <source>
        <strain>35000HP / ATCC 700724</strain>
    </source>
</reference>
<gene>
    <name evidence="1" type="primary">asnS</name>
    <name type="ordered locus">HD_1411</name>
</gene>
<keyword id="KW-0030">Aminoacyl-tRNA synthetase</keyword>
<keyword id="KW-0067">ATP-binding</keyword>
<keyword id="KW-0963">Cytoplasm</keyword>
<keyword id="KW-0436">Ligase</keyword>
<keyword id="KW-0547">Nucleotide-binding</keyword>
<keyword id="KW-0648">Protein biosynthesis</keyword>
<keyword id="KW-1185">Reference proteome</keyword>
<evidence type="ECO:0000255" key="1">
    <source>
        <dbReference type="HAMAP-Rule" id="MF_00534"/>
    </source>
</evidence>
<proteinExistence type="inferred from homology"/>
<organism>
    <name type="scientific">Haemophilus ducreyi (strain 35000HP / ATCC 700724)</name>
    <dbReference type="NCBI Taxonomy" id="233412"/>
    <lineage>
        <taxon>Bacteria</taxon>
        <taxon>Pseudomonadati</taxon>
        <taxon>Pseudomonadota</taxon>
        <taxon>Gammaproteobacteria</taxon>
        <taxon>Pasteurellales</taxon>
        <taxon>Pasteurellaceae</taxon>
        <taxon>Haemophilus</taxon>
    </lineage>
</organism>
<accession>Q7VLL7</accession>
<protein>
    <recommendedName>
        <fullName evidence="1">Asparagine--tRNA ligase</fullName>
        <ecNumber evidence="1">6.1.1.22</ecNumber>
    </recommendedName>
    <alternativeName>
        <fullName evidence="1">Asparaginyl-tRNA synthetase</fullName>
        <shortName evidence="1">AsnRS</shortName>
    </alternativeName>
</protein>
<dbReference type="EC" id="6.1.1.22" evidence="1"/>
<dbReference type="EMBL" id="AE017143">
    <property type="protein sequence ID" value="AAP96218.1"/>
    <property type="molecule type" value="Genomic_DNA"/>
</dbReference>
<dbReference type="RefSeq" id="WP_010945267.1">
    <property type="nucleotide sequence ID" value="NC_002940.2"/>
</dbReference>
<dbReference type="SMR" id="Q7VLL7"/>
<dbReference type="STRING" id="233412.HD_1411"/>
<dbReference type="KEGG" id="hdu:HD_1411"/>
<dbReference type="eggNOG" id="COG0017">
    <property type="taxonomic scope" value="Bacteria"/>
</dbReference>
<dbReference type="HOGENOM" id="CLU_004553_2_0_6"/>
<dbReference type="OrthoDB" id="9762036at2"/>
<dbReference type="Proteomes" id="UP000001022">
    <property type="component" value="Chromosome"/>
</dbReference>
<dbReference type="GO" id="GO:0005737">
    <property type="term" value="C:cytoplasm"/>
    <property type="evidence" value="ECO:0007669"/>
    <property type="project" value="UniProtKB-SubCell"/>
</dbReference>
<dbReference type="GO" id="GO:0004816">
    <property type="term" value="F:asparagine-tRNA ligase activity"/>
    <property type="evidence" value="ECO:0007669"/>
    <property type="project" value="UniProtKB-UniRule"/>
</dbReference>
<dbReference type="GO" id="GO:0005524">
    <property type="term" value="F:ATP binding"/>
    <property type="evidence" value="ECO:0007669"/>
    <property type="project" value="UniProtKB-UniRule"/>
</dbReference>
<dbReference type="GO" id="GO:0003676">
    <property type="term" value="F:nucleic acid binding"/>
    <property type="evidence" value="ECO:0007669"/>
    <property type="project" value="InterPro"/>
</dbReference>
<dbReference type="GO" id="GO:0006421">
    <property type="term" value="P:asparaginyl-tRNA aminoacylation"/>
    <property type="evidence" value="ECO:0007669"/>
    <property type="project" value="UniProtKB-UniRule"/>
</dbReference>
<dbReference type="CDD" id="cd00776">
    <property type="entry name" value="AsxRS_core"/>
    <property type="match status" value="1"/>
</dbReference>
<dbReference type="CDD" id="cd04318">
    <property type="entry name" value="EcAsnRS_like_N"/>
    <property type="match status" value="1"/>
</dbReference>
<dbReference type="FunFam" id="3.30.930.10:FF:000016">
    <property type="entry name" value="Asparagine--tRNA ligase"/>
    <property type="match status" value="1"/>
</dbReference>
<dbReference type="Gene3D" id="3.30.930.10">
    <property type="entry name" value="Bira Bifunctional Protein, Domain 2"/>
    <property type="match status" value="1"/>
</dbReference>
<dbReference type="Gene3D" id="2.40.50.140">
    <property type="entry name" value="Nucleic acid-binding proteins"/>
    <property type="match status" value="1"/>
</dbReference>
<dbReference type="HAMAP" id="MF_00534">
    <property type="entry name" value="Asn_tRNA_synth"/>
    <property type="match status" value="1"/>
</dbReference>
<dbReference type="InterPro" id="IPR004364">
    <property type="entry name" value="Aa-tRNA-synt_II"/>
</dbReference>
<dbReference type="InterPro" id="IPR006195">
    <property type="entry name" value="aa-tRNA-synth_II"/>
</dbReference>
<dbReference type="InterPro" id="IPR045864">
    <property type="entry name" value="aa-tRNA-synth_II/BPL/LPL"/>
</dbReference>
<dbReference type="InterPro" id="IPR004522">
    <property type="entry name" value="Asn-tRNA-ligase"/>
</dbReference>
<dbReference type="InterPro" id="IPR002312">
    <property type="entry name" value="Asp/Asn-tRNA-synth_IIb"/>
</dbReference>
<dbReference type="InterPro" id="IPR012340">
    <property type="entry name" value="NA-bd_OB-fold"/>
</dbReference>
<dbReference type="InterPro" id="IPR004365">
    <property type="entry name" value="NA-bd_OB_tRNA"/>
</dbReference>
<dbReference type="NCBIfam" id="TIGR00457">
    <property type="entry name" value="asnS"/>
    <property type="match status" value="1"/>
</dbReference>
<dbReference type="NCBIfam" id="NF003037">
    <property type="entry name" value="PRK03932.1"/>
    <property type="match status" value="1"/>
</dbReference>
<dbReference type="PANTHER" id="PTHR22594:SF34">
    <property type="entry name" value="ASPARAGINE--TRNA LIGASE, MITOCHONDRIAL-RELATED"/>
    <property type="match status" value="1"/>
</dbReference>
<dbReference type="PANTHER" id="PTHR22594">
    <property type="entry name" value="ASPARTYL/LYSYL-TRNA SYNTHETASE"/>
    <property type="match status" value="1"/>
</dbReference>
<dbReference type="Pfam" id="PF00152">
    <property type="entry name" value="tRNA-synt_2"/>
    <property type="match status" value="1"/>
</dbReference>
<dbReference type="Pfam" id="PF01336">
    <property type="entry name" value="tRNA_anti-codon"/>
    <property type="match status" value="1"/>
</dbReference>
<dbReference type="PRINTS" id="PR01042">
    <property type="entry name" value="TRNASYNTHASP"/>
</dbReference>
<dbReference type="SUPFAM" id="SSF55681">
    <property type="entry name" value="Class II aaRS and biotin synthetases"/>
    <property type="match status" value="1"/>
</dbReference>
<dbReference type="SUPFAM" id="SSF50249">
    <property type="entry name" value="Nucleic acid-binding proteins"/>
    <property type="match status" value="1"/>
</dbReference>
<dbReference type="PROSITE" id="PS50862">
    <property type="entry name" value="AA_TRNA_LIGASE_II"/>
    <property type="match status" value="1"/>
</dbReference>
<feature type="chain" id="PRO_0000176413" description="Asparagine--tRNA ligase">
    <location>
        <begin position="1"/>
        <end position="467"/>
    </location>
</feature>
<name>SYN_HAEDU</name>
<comment type="catalytic activity">
    <reaction evidence="1">
        <text>tRNA(Asn) + L-asparagine + ATP = L-asparaginyl-tRNA(Asn) + AMP + diphosphate + H(+)</text>
        <dbReference type="Rhea" id="RHEA:11180"/>
        <dbReference type="Rhea" id="RHEA-COMP:9659"/>
        <dbReference type="Rhea" id="RHEA-COMP:9674"/>
        <dbReference type="ChEBI" id="CHEBI:15378"/>
        <dbReference type="ChEBI" id="CHEBI:30616"/>
        <dbReference type="ChEBI" id="CHEBI:33019"/>
        <dbReference type="ChEBI" id="CHEBI:58048"/>
        <dbReference type="ChEBI" id="CHEBI:78442"/>
        <dbReference type="ChEBI" id="CHEBI:78515"/>
        <dbReference type="ChEBI" id="CHEBI:456215"/>
        <dbReference type="EC" id="6.1.1.22"/>
    </reaction>
</comment>
<comment type="subunit">
    <text evidence="1">Homodimer.</text>
</comment>
<comment type="subcellular location">
    <subcellularLocation>
        <location evidence="1">Cytoplasm</location>
    </subcellularLocation>
</comment>
<comment type="similarity">
    <text evidence="1">Belongs to the class-II aminoacyl-tRNA synthetase family.</text>
</comment>